<organism>
    <name type="scientific">Acinetobacter baylyi (strain ATCC 33305 / BD413 / ADP1)</name>
    <dbReference type="NCBI Taxonomy" id="62977"/>
    <lineage>
        <taxon>Bacteria</taxon>
        <taxon>Pseudomonadati</taxon>
        <taxon>Pseudomonadota</taxon>
        <taxon>Gammaproteobacteria</taxon>
        <taxon>Moraxellales</taxon>
        <taxon>Moraxellaceae</taxon>
        <taxon>Acinetobacter</taxon>
    </lineage>
</organism>
<proteinExistence type="inferred from homology"/>
<reference key="1">
    <citation type="journal article" date="2004" name="Nucleic Acids Res.">
        <title>Unique features revealed by the genome sequence of Acinetobacter sp. ADP1, a versatile and naturally transformation competent bacterium.</title>
        <authorList>
            <person name="Barbe V."/>
            <person name="Vallenet D."/>
            <person name="Fonknechten N."/>
            <person name="Kreimeyer A."/>
            <person name="Oztas S."/>
            <person name="Labarre L."/>
            <person name="Cruveiller S."/>
            <person name="Robert C."/>
            <person name="Duprat S."/>
            <person name="Wincker P."/>
            <person name="Ornston L.N."/>
            <person name="Weissenbach J."/>
            <person name="Marliere P."/>
            <person name="Cohen G.N."/>
            <person name="Medigue C."/>
        </authorList>
    </citation>
    <scope>NUCLEOTIDE SEQUENCE [LARGE SCALE GENOMIC DNA]</scope>
    <source>
        <strain>ATCC 33305 / BD413 / ADP1</strain>
    </source>
</reference>
<sequence>MLPFKLWVDADALPRILREVILRASDRYQLEVTFVANQNVGITPSVRIKSIQVMSGADRADQEIVDRMQANDIVITQDIPLAAQVIEKGGIAIHPRGEVYTTANVKARLHLRDFMDTLRGAGVQTGGPPPISERDKREFSSALDQTILKQKRKTA</sequence>
<gene>
    <name type="ordered locus">ACIAD2644</name>
</gene>
<accession>Q6F963</accession>
<evidence type="ECO:0000255" key="1">
    <source>
        <dbReference type="HAMAP-Rule" id="MF_00489"/>
    </source>
</evidence>
<evidence type="ECO:0000256" key="2">
    <source>
        <dbReference type="SAM" id="MobiDB-lite"/>
    </source>
</evidence>
<feature type="chain" id="PRO_0000175952" description="UPF0178 protein ACIAD2644">
    <location>
        <begin position="1"/>
        <end position="155"/>
    </location>
</feature>
<feature type="region of interest" description="Disordered" evidence="2">
    <location>
        <begin position="120"/>
        <end position="155"/>
    </location>
</feature>
<dbReference type="EMBL" id="CR543861">
    <property type="protein sequence ID" value="CAG69402.1"/>
    <property type="molecule type" value="Genomic_DNA"/>
</dbReference>
<dbReference type="RefSeq" id="WP_004928874.1">
    <property type="nucleotide sequence ID" value="NC_005966.1"/>
</dbReference>
<dbReference type="STRING" id="202950.GCA_001485005_02291"/>
<dbReference type="GeneID" id="45234922"/>
<dbReference type="KEGG" id="aci:ACIAD2644"/>
<dbReference type="eggNOG" id="COG1671">
    <property type="taxonomic scope" value="Bacteria"/>
</dbReference>
<dbReference type="HOGENOM" id="CLU_106619_2_1_6"/>
<dbReference type="OrthoDB" id="9798918at2"/>
<dbReference type="BioCyc" id="ASP62977:ACIAD_RS12025-MONOMER"/>
<dbReference type="Proteomes" id="UP000000430">
    <property type="component" value="Chromosome"/>
</dbReference>
<dbReference type="CDD" id="cd18720">
    <property type="entry name" value="PIN_YqxD-like"/>
    <property type="match status" value="1"/>
</dbReference>
<dbReference type="HAMAP" id="MF_00489">
    <property type="entry name" value="UPF0178"/>
    <property type="match status" value="1"/>
</dbReference>
<dbReference type="InterPro" id="IPR003791">
    <property type="entry name" value="UPF0178"/>
</dbReference>
<dbReference type="NCBIfam" id="NF001095">
    <property type="entry name" value="PRK00124.1"/>
    <property type="match status" value="1"/>
</dbReference>
<dbReference type="PANTHER" id="PTHR35146">
    <property type="entry name" value="UPF0178 PROTEIN YAII"/>
    <property type="match status" value="1"/>
</dbReference>
<dbReference type="PANTHER" id="PTHR35146:SF1">
    <property type="entry name" value="UPF0178 PROTEIN YAII"/>
    <property type="match status" value="1"/>
</dbReference>
<dbReference type="Pfam" id="PF02639">
    <property type="entry name" value="DUF188"/>
    <property type="match status" value="1"/>
</dbReference>
<protein>
    <recommendedName>
        <fullName evidence="1">UPF0178 protein ACIAD2644</fullName>
    </recommendedName>
</protein>
<comment type="similarity">
    <text evidence="1">Belongs to the UPF0178 family.</text>
</comment>
<name>Y2644_ACIAD</name>